<feature type="chain" id="PRO_0000270697" description="Large ribosomal subunit protein bL21">
    <location>
        <begin position="1"/>
        <end position="99"/>
    </location>
</feature>
<proteinExistence type="inferred from homology"/>
<gene>
    <name evidence="1" type="primary">rplU</name>
    <name type="ordered locus">NSE_0898</name>
</gene>
<reference key="1">
    <citation type="journal article" date="2006" name="PLoS Genet.">
        <title>Comparative genomics of emerging human ehrlichiosis agents.</title>
        <authorList>
            <person name="Dunning Hotopp J.C."/>
            <person name="Lin M."/>
            <person name="Madupu R."/>
            <person name="Crabtree J."/>
            <person name="Angiuoli S.V."/>
            <person name="Eisen J.A."/>
            <person name="Seshadri R."/>
            <person name="Ren Q."/>
            <person name="Wu M."/>
            <person name="Utterback T.R."/>
            <person name="Smith S."/>
            <person name="Lewis M."/>
            <person name="Khouri H."/>
            <person name="Zhang C."/>
            <person name="Niu H."/>
            <person name="Lin Q."/>
            <person name="Ohashi N."/>
            <person name="Zhi N."/>
            <person name="Nelson W.C."/>
            <person name="Brinkac L.M."/>
            <person name="Dodson R.J."/>
            <person name="Rosovitz M.J."/>
            <person name="Sundaram J.P."/>
            <person name="Daugherty S.C."/>
            <person name="Davidsen T."/>
            <person name="Durkin A.S."/>
            <person name="Gwinn M.L."/>
            <person name="Haft D.H."/>
            <person name="Selengut J.D."/>
            <person name="Sullivan S.A."/>
            <person name="Zafar N."/>
            <person name="Zhou L."/>
            <person name="Benahmed F."/>
            <person name="Forberger H."/>
            <person name="Halpin R."/>
            <person name="Mulligan S."/>
            <person name="Robinson J."/>
            <person name="White O."/>
            <person name="Rikihisa Y."/>
            <person name="Tettelin H."/>
        </authorList>
    </citation>
    <scope>NUCLEOTIDE SEQUENCE [LARGE SCALE GENOMIC DNA]</scope>
    <source>
        <strain>ATCC VR-367 / Miyayama</strain>
    </source>
</reference>
<organism>
    <name type="scientific">Neorickettsia sennetsu (strain ATCC VR-367 / Miyayama)</name>
    <name type="common">Ehrlichia sennetsu</name>
    <dbReference type="NCBI Taxonomy" id="222891"/>
    <lineage>
        <taxon>Bacteria</taxon>
        <taxon>Pseudomonadati</taxon>
        <taxon>Pseudomonadota</taxon>
        <taxon>Alphaproteobacteria</taxon>
        <taxon>Rickettsiales</taxon>
        <taxon>Anaplasmataceae</taxon>
        <taxon>Neorickettsia</taxon>
    </lineage>
</organism>
<evidence type="ECO:0000255" key="1">
    <source>
        <dbReference type="HAMAP-Rule" id="MF_01363"/>
    </source>
</evidence>
<evidence type="ECO:0000305" key="2"/>
<keyword id="KW-0687">Ribonucleoprotein</keyword>
<keyword id="KW-0689">Ribosomal protein</keyword>
<keyword id="KW-0694">RNA-binding</keyword>
<keyword id="KW-0699">rRNA-binding</keyword>
<name>RL21_NEOSM</name>
<protein>
    <recommendedName>
        <fullName evidence="1">Large ribosomal subunit protein bL21</fullName>
    </recommendedName>
    <alternativeName>
        <fullName evidence="2">50S ribosomal protein L21</fullName>
    </alternativeName>
</protein>
<accession>Q2GCN2</accession>
<sequence length="99" mass="11273">MLAVVEQGSKQYLVRKGQVISVEKISAEPGKEVEISCVKCVLDEEARPHFGVGTVKAKVLAQERGEKLVIFKKRRRKNSRRRNGHRQYVTILRVTDVTL</sequence>
<comment type="function">
    <text evidence="1">This protein binds to 23S rRNA in the presence of protein L20.</text>
</comment>
<comment type="subunit">
    <text evidence="1">Part of the 50S ribosomal subunit. Contacts protein L20.</text>
</comment>
<comment type="similarity">
    <text evidence="1">Belongs to the bacterial ribosomal protein bL21 family.</text>
</comment>
<dbReference type="EMBL" id="CP000237">
    <property type="protein sequence ID" value="ABD46480.1"/>
    <property type="molecule type" value="Genomic_DNA"/>
</dbReference>
<dbReference type="RefSeq" id="WP_011452270.1">
    <property type="nucleotide sequence ID" value="NC_007798.1"/>
</dbReference>
<dbReference type="SMR" id="Q2GCN2"/>
<dbReference type="STRING" id="222891.NSE_0898"/>
<dbReference type="KEGG" id="nse:NSE_0898"/>
<dbReference type="eggNOG" id="COG0261">
    <property type="taxonomic scope" value="Bacteria"/>
</dbReference>
<dbReference type="HOGENOM" id="CLU_061463_3_2_5"/>
<dbReference type="OrthoDB" id="9813334at2"/>
<dbReference type="Proteomes" id="UP000001942">
    <property type="component" value="Chromosome"/>
</dbReference>
<dbReference type="GO" id="GO:0005737">
    <property type="term" value="C:cytoplasm"/>
    <property type="evidence" value="ECO:0007669"/>
    <property type="project" value="UniProtKB-ARBA"/>
</dbReference>
<dbReference type="GO" id="GO:1990904">
    <property type="term" value="C:ribonucleoprotein complex"/>
    <property type="evidence" value="ECO:0007669"/>
    <property type="project" value="UniProtKB-KW"/>
</dbReference>
<dbReference type="GO" id="GO:0005840">
    <property type="term" value="C:ribosome"/>
    <property type="evidence" value="ECO:0007669"/>
    <property type="project" value="UniProtKB-KW"/>
</dbReference>
<dbReference type="GO" id="GO:0019843">
    <property type="term" value="F:rRNA binding"/>
    <property type="evidence" value="ECO:0007669"/>
    <property type="project" value="UniProtKB-UniRule"/>
</dbReference>
<dbReference type="GO" id="GO:0003735">
    <property type="term" value="F:structural constituent of ribosome"/>
    <property type="evidence" value="ECO:0007669"/>
    <property type="project" value="InterPro"/>
</dbReference>
<dbReference type="GO" id="GO:0006412">
    <property type="term" value="P:translation"/>
    <property type="evidence" value="ECO:0007669"/>
    <property type="project" value="UniProtKB-UniRule"/>
</dbReference>
<dbReference type="HAMAP" id="MF_01363">
    <property type="entry name" value="Ribosomal_bL21"/>
    <property type="match status" value="1"/>
</dbReference>
<dbReference type="InterPro" id="IPR028909">
    <property type="entry name" value="bL21-like"/>
</dbReference>
<dbReference type="InterPro" id="IPR036164">
    <property type="entry name" value="bL21-like_sf"/>
</dbReference>
<dbReference type="InterPro" id="IPR001787">
    <property type="entry name" value="Ribosomal_bL21"/>
</dbReference>
<dbReference type="InterPro" id="IPR018258">
    <property type="entry name" value="Ribosomal_bL21_CS"/>
</dbReference>
<dbReference type="NCBIfam" id="TIGR00061">
    <property type="entry name" value="L21"/>
    <property type="match status" value="1"/>
</dbReference>
<dbReference type="PANTHER" id="PTHR21349">
    <property type="entry name" value="50S RIBOSOMAL PROTEIN L21"/>
    <property type="match status" value="1"/>
</dbReference>
<dbReference type="PANTHER" id="PTHR21349:SF0">
    <property type="entry name" value="LARGE RIBOSOMAL SUBUNIT PROTEIN BL21M"/>
    <property type="match status" value="1"/>
</dbReference>
<dbReference type="Pfam" id="PF00829">
    <property type="entry name" value="Ribosomal_L21p"/>
    <property type="match status" value="1"/>
</dbReference>
<dbReference type="SUPFAM" id="SSF141091">
    <property type="entry name" value="L21p-like"/>
    <property type="match status" value="1"/>
</dbReference>
<dbReference type="PROSITE" id="PS01169">
    <property type="entry name" value="RIBOSOMAL_L21"/>
    <property type="match status" value="1"/>
</dbReference>